<protein>
    <recommendedName>
        <fullName evidence="1">Elongation factor 2</fullName>
        <shortName evidence="1">EF-2</shortName>
    </recommendedName>
</protein>
<keyword id="KW-0963">Cytoplasm</keyword>
<keyword id="KW-0251">Elongation factor</keyword>
<keyword id="KW-0342">GTP-binding</keyword>
<keyword id="KW-0547">Nucleotide-binding</keyword>
<keyword id="KW-0648">Protein biosynthesis</keyword>
<evidence type="ECO:0000255" key="1">
    <source>
        <dbReference type="HAMAP-Rule" id="MF_00054"/>
    </source>
</evidence>
<dbReference type="EMBL" id="BA000011">
    <property type="protein sequence ID" value="BAB60219.1"/>
    <property type="molecule type" value="Genomic_DNA"/>
</dbReference>
<dbReference type="RefSeq" id="WP_010917307.1">
    <property type="nucleotide sequence ID" value="NC_002689.2"/>
</dbReference>
<dbReference type="SMR" id="Q979T3"/>
<dbReference type="STRING" id="273116.gene:9381873"/>
<dbReference type="PaxDb" id="273116-14325315"/>
<dbReference type="GeneID" id="1441189"/>
<dbReference type="KEGG" id="tvo:TVG1104527"/>
<dbReference type="eggNOG" id="arCOG01559">
    <property type="taxonomic scope" value="Archaea"/>
</dbReference>
<dbReference type="HOGENOM" id="CLU_002794_11_1_2"/>
<dbReference type="OrthoDB" id="6290at2157"/>
<dbReference type="PhylomeDB" id="Q979T3"/>
<dbReference type="Proteomes" id="UP000001017">
    <property type="component" value="Chromosome"/>
</dbReference>
<dbReference type="GO" id="GO:0005829">
    <property type="term" value="C:cytosol"/>
    <property type="evidence" value="ECO:0007669"/>
    <property type="project" value="TreeGrafter"/>
</dbReference>
<dbReference type="GO" id="GO:1990904">
    <property type="term" value="C:ribonucleoprotein complex"/>
    <property type="evidence" value="ECO:0007669"/>
    <property type="project" value="TreeGrafter"/>
</dbReference>
<dbReference type="GO" id="GO:0005525">
    <property type="term" value="F:GTP binding"/>
    <property type="evidence" value="ECO:0007669"/>
    <property type="project" value="UniProtKB-UniRule"/>
</dbReference>
<dbReference type="GO" id="GO:0003924">
    <property type="term" value="F:GTPase activity"/>
    <property type="evidence" value="ECO:0007669"/>
    <property type="project" value="InterPro"/>
</dbReference>
<dbReference type="GO" id="GO:0003746">
    <property type="term" value="F:translation elongation factor activity"/>
    <property type="evidence" value="ECO:0007669"/>
    <property type="project" value="UniProtKB-UniRule"/>
</dbReference>
<dbReference type="CDD" id="cd01681">
    <property type="entry name" value="aeEF2_snRNP_like_IV"/>
    <property type="match status" value="1"/>
</dbReference>
<dbReference type="CDD" id="cd01885">
    <property type="entry name" value="EF2"/>
    <property type="match status" value="1"/>
</dbReference>
<dbReference type="CDD" id="cd16268">
    <property type="entry name" value="EF2_II"/>
    <property type="match status" value="1"/>
</dbReference>
<dbReference type="CDD" id="cd16261">
    <property type="entry name" value="EF2_snRNP_III"/>
    <property type="match status" value="1"/>
</dbReference>
<dbReference type="CDD" id="cd01514">
    <property type="entry name" value="Elongation_Factor_C"/>
    <property type="match status" value="1"/>
</dbReference>
<dbReference type="FunFam" id="3.30.70.870:FF:000002">
    <property type="entry name" value="Translation elongation factor 2"/>
    <property type="match status" value="1"/>
</dbReference>
<dbReference type="Gene3D" id="3.30.230.10">
    <property type="match status" value="1"/>
</dbReference>
<dbReference type="Gene3D" id="3.30.70.240">
    <property type="match status" value="1"/>
</dbReference>
<dbReference type="Gene3D" id="3.30.70.870">
    <property type="entry name" value="Elongation Factor G (Translational Gtpase), domain 3"/>
    <property type="match status" value="1"/>
</dbReference>
<dbReference type="Gene3D" id="3.40.50.300">
    <property type="entry name" value="P-loop containing nucleotide triphosphate hydrolases"/>
    <property type="match status" value="1"/>
</dbReference>
<dbReference type="Gene3D" id="2.40.30.10">
    <property type="entry name" value="Translation factors"/>
    <property type="match status" value="1"/>
</dbReference>
<dbReference type="HAMAP" id="MF_00054_A">
    <property type="entry name" value="EF_G_EF_2_A"/>
    <property type="match status" value="1"/>
</dbReference>
<dbReference type="InterPro" id="IPR041095">
    <property type="entry name" value="EFG_II"/>
</dbReference>
<dbReference type="InterPro" id="IPR035647">
    <property type="entry name" value="EFG_III/V"/>
</dbReference>
<dbReference type="InterPro" id="IPR000640">
    <property type="entry name" value="EFG_V-like"/>
</dbReference>
<dbReference type="InterPro" id="IPR004161">
    <property type="entry name" value="EFTu-like_2"/>
</dbReference>
<dbReference type="InterPro" id="IPR031157">
    <property type="entry name" value="G_TR_CS"/>
</dbReference>
<dbReference type="InterPro" id="IPR027417">
    <property type="entry name" value="P-loop_NTPase"/>
</dbReference>
<dbReference type="InterPro" id="IPR020568">
    <property type="entry name" value="Ribosomal_Su5_D2-typ_SF"/>
</dbReference>
<dbReference type="InterPro" id="IPR014721">
    <property type="entry name" value="Ribsml_uS5_D2-typ_fold_subgr"/>
</dbReference>
<dbReference type="InterPro" id="IPR005225">
    <property type="entry name" value="Small_GTP-bd"/>
</dbReference>
<dbReference type="InterPro" id="IPR000795">
    <property type="entry name" value="T_Tr_GTP-bd_dom"/>
</dbReference>
<dbReference type="InterPro" id="IPR009000">
    <property type="entry name" value="Transl_B-barrel_sf"/>
</dbReference>
<dbReference type="InterPro" id="IPR004543">
    <property type="entry name" value="Transl_elong_EFG/EF2_arc"/>
</dbReference>
<dbReference type="InterPro" id="IPR005517">
    <property type="entry name" value="Transl_elong_EFG/EF2_IV"/>
</dbReference>
<dbReference type="NCBIfam" id="TIGR00490">
    <property type="entry name" value="aEF-2"/>
    <property type="match status" value="1"/>
</dbReference>
<dbReference type="NCBIfam" id="TIGR00231">
    <property type="entry name" value="small_GTP"/>
    <property type="match status" value="1"/>
</dbReference>
<dbReference type="PANTHER" id="PTHR42908:SF3">
    <property type="entry name" value="ELONGATION FACTOR-LIKE GTPASE 1"/>
    <property type="match status" value="1"/>
</dbReference>
<dbReference type="PANTHER" id="PTHR42908">
    <property type="entry name" value="TRANSLATION ELONGATION FACTOR-RELATED"/>
    <property type="match status" value="1"/>
</dbReference>
<dbReference type="Pfam" id="PF00679">
    <property type="entry name" value="EFG_C"/>
    <property type="match status" value="1"/>
</dbReference>
<dbReference type="Pfam" id="PF14492">
    <property type="entry name" value="EFG_III"/>
    <property type="match status" value="1"/>
</dbReference>
<dbReference type="Pfam" id="PF03764">
    <property type="entry name" value="EFG_IV"/>
    <property type="match status" value="1"/>
</dbReference>
<dbReference type="Pfam" id="PF00009">
    <property type="entry name" value="GTP_EFTU"/>
    <property type="match status" value="1"/>
</dbReference>
<dbReference type="Pfam" id="PF03144">
    <property type="entry name" value="GTP_EFTU_D2"/>
    <property type="match status" value="1"/>
</dbReference>
<dbReference type="PRINTS" id="PR00315">
    <property type="entry name" value="ELONGATNFCT"/>
</dbReference>
<dbReference type="SMART" id="SM00838">
    <property type="entry name" value="EFG_C"/>
    <property type="match status" value="1"/>
</dbReference>
<dbReference type="SMART" id="SM00889">
    <property type="entry name" value="EFG_IV"/>
    <property type="match status" value="1"/>
</dbReference>
<dbReference type="SUPFAM" id="SSF54980">
    <property type="entry name" value="EF-G C-terminal domain-like"/>
    <property type="match status" value="2"/>
</dbReference>
<dbReference type="SUPFAM" id="SSF52540">
    <property type="entry name" value="P-loop containing nucleoside triphosphate hydrolases"/>
    <property type="match status" value="1"/>
</dbReference>
<dbReference type="SUPFAM" id="SSF54211">
    <property type="entry name" value="Ribosomal protein S5 domain 2-like"/>
    <property type="match status" value="1"/>
</dbReference>
<dbReference type="SUPFAM" id="SSF50447">
    <property type="entry name" value="Translation proteins"/>
    <property type="match status" value="1"/>
</dbReference>
<dbReference type="PROSITE" id="PS00301">
    <property type="entry name" value="G_TR_1"/>
    <property type="match status" value="1"/>
</dbReference>
<dbReference type="PROSITE" id="PS51722">
    <property type="entry name" value="G_TR_2"/>
    <property type="match status" value="1"/>
</dbReference>
<comment type="function">
    <text evidence="1">Catalyzes the GTP-dependent ribosomal translocation step during translation elongation. During this step, the ribosome changes from the pre-translocational (PRE) to the post-translocational (POST) state as the newly formed A-site-bound peptidyl-tRNA and P-site-bound deacylated tRNA move to the P and E sites, respectively. Catalyzes the coordinated movement of the two tRNA molecules, the mRNA and conformational changes in the ribosome.</text>
</comment>
<comment type="subcellular location">
    <subcellularLocation>
        <location evidence="1">Cytoplasm</location>
    </subcellularLocation>
</comment>
<comment type="similarity">
    <text evidence="1">Belongs to the TRAFAC class translation factor GTPase superfamily. Classic translation factor GTPase family. EF-G/EF-2 subfamily.</text>
</comment>
<sequence>MGRKEDNIEKALRIVEHTELVRNIGIVAHIDHGKTTLSDNLIAGAGMMSEELAGKQLVLDYDEQEQARGITINAAVASMVHAFQGKEYLINLIDTPGHVDFGGDVTRAMRAVDGVIVVVDSVEGVMPQTETVIRQALREYVKPVLFINKIDRLINELRLNSDEMQKRFTKIISDVNKLISKYAPKEFTKEWQVSVQDGKVAFGSAYNNWAISVPSMAETKITFKDIVEYVKNGKQKELAQKNQLHKIILNMVIRHLPDPKTAQSYRIKQIWKGDLETEVGKSMVSCDFKGPVAMMVTKIIIDPHAGEIAIGRLFSGTVKKGTDLYISGDGKGKVQTLAMMVGPDRIPVEEVTAGNIAAIVGLKGAIAGSTVSSIENMEPFEPMIHYSEPVVTLAIEAKHTADLPRLIDVLRDISKADPSIQVDINQETGEHLISGMGELHLDVTLYRIKNDYKIEVETSEPIVVYRETVEKKGGPFEGKSPNKHNRFYFEVEPLKPEVIQAIEDGDIPQGSKFKDKKTIIETLVSKGIDREEARGLVCVEGTNIMFDVTRGIQYLDETMELLIEAFTEVMNRGPLANEKVFGVKARLVDAKLHEDSIHRGPAQVIPAGRNSIYGAMCEAKRILLEPVQKVFINVPQEEMGSAINEVQQRRGVIEDMTQEGEEVSLVARIPVSGMFGFASAIRSATGGKVLWSFENAGYQKVPPELQDSVVRSIRERKGLRPEPYDADYYASM</sequence>
<reference key="1">
    <citation type="journal article" date="2000" name="Proc. Natl. Acad. Sci. U.S.A.">
        <title>Archaeal adaptation to higher temperatures revealed by genomic sequence of Thermoplasma volcanium.</title>
        <authorList>
            <person name="Kawashima T."/>
            <person name="Amano N."/>
            <person name="Koike H."/>
            <person name="Makino S."/>
            <person name="Higuchi S."/>
            <person name="Kawashima-Ohya Y."/>
            <person name="Watanabe K."/>
            <person name="Yamazaki M."/>
            <person name="Kanehori K."/>
            <person name="Kawamoto T."/>
            <person name="Nunoshiba T."/>
            <person name="Yamamoto Y."/>
            <person name="Aramaki H."/>
            <person name="Makino K."/>
            <person name="Suzuki M."/>
        </authorList>
    </citation>
    <scope>NUCLEOTIDE SEQUENCE [LARGE SCALE GENOMIC DNA]</scope>
    <source>
        <strain>ATCC 51530 / DSM 4299 / JCM 9571 / NBRC 15438 / GSS1</strain>
    </source>
</reference>
<accession>Q979T3</accession>
<organism>
    <name type="scientific">Thermoplasma volcanium (strain ATCC 51530 / DSM 4299 / JCM 9571 / NBRC 15438 / GSS1)</name>
    <dbReference type="NCBI Taxonomy" id="273116"/>
    <lineage>
        <taxon>Archaea</taxon>
        <taxon>Methanobacteriati</taxon>
        <taxon>Thermoplasmatota</taxon>
        <taxon>Thermoplasmata</taxon>
        <taxon>Thermoplasmatales</taxon>
        <taxon>Thermoplasmataceae</taxon>
        <taxon>Thermoplasma</taxon>
    </lineage>
</organism>
<proteinExistence type="inferred from homology"/>
<feature type="chain" id="PRO_0000091051" description="Elongation factor 2">
    <location>
        <begin position="1"/>
        <end position="732"/>
    </location>
</feature>
<feature type="domain" description="tr-type G">
    <location>
        <begin position="19"/>
        <end position="228"/>
    </location>
</feature>
<feature type="binding site" evidence="1">
    <location>
        <begin position="28"/>
        <end position="35"/>
    </location>
    <ligand>
        <name>GTP</name>
        <dbReference type="ChEBI" id="CHEBI:37565"/>
    </ligand>
</feature>
<feature type="binding site" evidence="1">
    <location>
        <begin position="94"/>
        <end position="98"/>
    </location>
    <ligand>
        <name>GTP</name>
        <dbReference type="ChEBI" id="CHEBI:37565"/>
    </ligand>
</feature>
<feature type="binding site" evidence="1">
    <location>
        <begin position="148"/>
        <end position="151"/>
    </location>
    <ligand>
        <name>GTP</name>
        <dbReference type="ChEBI" id="CHEBI:37565"/>
    </ligand>
</feature>
<feature type="modified residue" description="Diphthamide" evidence="1">
    <location>
        <position position="598"/>
    </location>
</feature>
<gene>
    <name evidence="1" type="primary">fusA</name>
    <name type="ordered locus">TV1077</name>
    <name type="ORF">TVG1104527</name>
</gene>
<name>EF2_THEVO</name>